<protein>
    <recommendedName>
        <fullName evidence="1">Small ribosomal subunit protein bS21</fullName>
    </recommendedName>
    <alternativeName>
        <fullName evidence="3">30S ribosomal protein S21</fullName>
    </alternativeName>
</protein>
<evidence type="ECO:0000255" key="1">
    <source>
        <dbReference type="HAMAP-Rule" id="MF_00358"/>
    </source>
</evidence>
<evidence type="ECO:0000256" key="2">
    <source>
        <dbReference type="SAM" id="MobiDB-lite"/>
    </source>
</evidence>
<evidence type="ECO:0000305" key="3"/>
<feature type="chain" id="PRO_1000079404" description="Small ribosomal subunit protein bS21">
    <location>
        <begin position="1"/>
        <end position="64"/>
    </location>
</feature>
<feature type="region of interest" description="Disordered" evidence="2">
    <location>
        <begin position="26"/>
        <end position="64"/>
    </location>
</feature>
<feature type="compositionally biased region" description="Basic residues" evidence="2">
    <location>
        <begin position="43"/>
        <end position="64"/>
    </location>
</feature>
<accession>A5FSB3</accession>
<gene>
    <name evidence="1" type="primary">rpsU</name>
    <name type="ordered locus">DehaBAV1_0329</name>
</gene>
<sequence>MADVRPENNESFESMLKRFNRKVQQDGILSEARRRTRFERPPTRRKRKDAAKRRLAIKAARKAT</sequence>
<reference key="1">
    <citation type="submission" date="2007-05" db="EMBL/GenBank/DDBJ databases">
        <title>Complete sequence of Dehalococcoides sp. BAV1.</title>
        <authorList>
            <consortium name="US DOE Joint Genome Institute"/>
            <person name="Copeland A."/>
            <person name="Lucas S."/>
            <person name="Lapidus A."/>
            <person name="Barry K."/>
            <person name="Detter J.C."/>
            <person name="Glavina del Rio T."/>
            <person name="Hammon N."/>
            <person name="Israni S."/>
            <person name="Pitluck S."/>
            <person name="Lowry S."/>
            <person name="Clum A."/>
            <person name="Schmutz J."/>
            <person name="Larimer F."/>
            <person name="Land M."/>
            <person name="Hauser L."/>
            <person name="Kyrpides N."/>
            <person name="Kim E."/>
            <person name="Ritalahti K.M."/>
            <person name="Loeffler F."/>
            <person name="Richardson P."/>
        </authorList>
    </citation>
    <scope>NUCLEOTIDE SEQUENCE [LARGE SCALE GENOMIC DNA]</scope>
    <source>
        <strain>ATCC BAA-2100 / JCM 16839 / KCTC 5957 / BAV1</strain>
    </source>
</reference>
<dbReference type="EMBL" id="CP000688">
    <property type="protein sequence ID" value="ABQ16915.1"/>
    <property type="molecule type" value="Genomic_DNA"/>
</dbReference>
<dbReference type="SMR" id="A5FSB3"/>
<dbReference type="KEGG" id="deb:DehaBAV1_0329"/>
<dbReference type="PATRIC" id="fig|216389.18.peg.368"/>
<dbReference type="HOGENOM" id="CLU_159258_1_2_0"/>
<dbReference type="GO" id="GO:1990904">
    <property type="term" value="C:ribonucleoprotein complex"/>
    <property type="evidence" value="ECO:0007669"/>
    <property type="project" value="UniProtKB-KW"/>
</dbReference>
<dbReference type="GO" id="GO:0005840">
    <property type="term" value="C:ribosome"/>
    <property type="evidence" value="ECO:0007669"/>
    <property type="project" value="UniProtKB-KW"/>
</dbReference>
<dbReference type="GO" id="GO:0003735">
    <property type="term" value="F:structural constituent of ribosome"/>
    <property type="evidence" value="ECO:0007669"/>
    <property type="project" value="InterPro"/>
</dbReference>
<dbReference type="GO" id="GO:0006412">
    <property type="term" value="P:translation"/>
    <property type="evidence" value="ECO:0007669"/>
    <property type="project" value="UniProtKB-UniRule"/>
</dbReference>
<dbReference type="Gene3D" id="1.20.5.1150">
    <property type="entry name" value="Ribosomal protein S8"/>
    <property type="match status" value="1"/>
</dbReference>
<dbReference type="HAMAP" id="MF_00358">
    <property type="entry name" value="Ribosomal_bS21"/>
    <property type="match status" value="1"/>
</dbReference>
<dbReference type="InterPro" id="IPR001911">
    <property type="entry name" value="Ribosomal_bS21"/>
</dbReference>
<dbReference type="InterPro" id="IPR038380">
    <property type="entry name" value="Ribosomal_bS21_sf"/>
</dbReference>
<dbReference type="NCBIfam" id="TIGR00030">
    <property type="entry name" value="S21p"/>
    <property type="match status" value="1"/>
</dbReference>
<dbReference type="Pfam" id="PF01165">
    <property type="entry name" value="Ribosomal_S21"/>
    <property type="match status" value="1"/>
</dbReference>
<dbReference type="PRINTS" id="PR00976">
    <property type="entry name" value="RIBOSOMALS21"/>
</dbReference>
<comment type="similarity">
    <text evidence="1">Belongs to the bacterial ribosomal protein bS21 family.</text>
</comment>
<organism>
    <name type="scientific">Dehalococcoides mccartyi (strain ATCC BAA-2100 / JCM 16839 / KCTC 5957 / BAV1)</name>
    <dbReference type="NCBI Taxonomy" id="216389"/>
    <lineage>
        <taxon>Bacteria</taxon>
        <taxon>Bacillati</taxon>
        <taxon>Chloroflexota</taxon>
        <taxon>Dehalococcoidia</taxon>
        <taxon>Dehalococcoidales</taxon>
        <taxon>Dehalococcoidaceae</taxon>
        <taxon>Dehalococcoides</taxon>
    </lineage>
</organism>
<proteinExistence type="inferred from homology"/>
<keyword id="KW-0687">Ribonucleoprotein</keyword>
<keyword id="KW-0689">Ribosomal protein</keyword>
<name>RS21_DEHMB</name>